<proteinExistence type="evidence at protein level"/>
<evidence type="ECO:0000250" key="1">
    <source>
        <dbReference type="UniProtKB" id="G2Q1C9"/>
    </source>
</evidence>
<evidence type="ECO:0000250" key="2">
    <source>
        <dbReference type="UniProtKB" id="P32800"/>
    </source>
</evidence>
<evidence type="ECO:0000255" key="3"/>
<evidence type="ECO:0000255" key="4">
    <source>
        <dbReference type="PROSITE-ProRule" id="PRU00175"/>
    </source>
</evidence>
<evidence type="ECO:0000269" key="5">
    <source>
    </source>
</evidence>
<evidence type="ECO:0000269" key="6">
    <source>
    </source>
</evidence>
<evidence type="ECO:0000269" key="7">
    <source>
    </source>
</evidence>
<evidence type="ECO:0000269" key="8">
    <source>
    </source>
</evidence>
<evidence type="ECO:0000269" key="9">
    <source>
    </source>
</evidence>
<evidence type="ECO:0000303" key="10">
    <source>
    </source>
</evidence>
<evidence type="ECO:0000303" key="11">
    <source>
    </source>
</evidence>
<evidence type="ECO:0000305" key="12"/>
<evidence type="ECO:0000305" key="13">
    <source>
    </source>
</evidence>
<evidence type="ECO:0000305" key="14">
    <source>
    </source>
</evidence>
<gene>
    <name type="primary">PEX2</name>
    <name evidence="10" type="synonym">TED3</name>
    <name type="ordered locus">At1g79810</name>
    <name type="ORF">F19K16.23</name>
    <name type="ORF">F20B17.23</name>
</gene>
<sequence>MTPSTPADDAWIRSYQRLLPESQSLLASRRSVIPVAISRVNQFDAARLDVEMSAMLKEQLVKVFTLMKPGMLFQYEPELDAFLEFLIWRFSIWVDKPTPGNALMNLRYRDERGVVAQHLGKVRTGLEGPGLTSPQKIWYCVASVGGQYLFSRLQSFSAFRRWGDSEQRPLARRLWTLVQRIEGIYKAASFLNLLSFLYTGRYRNLIEKALKARLVYRSPHMNRSVSFEYMNRQLVWNEFSEMLLLLLPLLNSSAVKNILSPFAKDKSSSTKEDTVTCPICQVDPAIPFIALPCQHRYCYYCIRTRCASAASFRCLRCNEPVVAIQREGVSSGK</sequence>
<reference key="1">
    <citation type="journal article" date="2000" name="Nature">
        <title>Sequence and analysis of chromosome 1 of the plant Arabidopsis thaliana.</title>
        <authorList>
            <person name="Theologis A."/>
            <person name="Ecker J.R."/>
            <person name="Palm C.J."/>
            <person name="Federspiel N.A."/>
            <person name="Kaul S."/>
            <person name="White O."/>
            <person name="Alonso J."/>
            <person name="Altafi H."/>
            <person name="Araujo R."/>
            <person name="Bowman C.L."/>
            <person name="Brooks S.Y."/>
            <person name="Buehler E."/>
            <person name="Chan A."/>
            <person name="Chao Q."/>
            <person name="Chen H."/>
            <person name="Cheuk R.F."/>
            <person name="Chin C.W."/>
            <person name="Chung M.K."/>
            <person name="Conn L."/>
            <person name="Conway A.B."/>
            <person name="Conway A.R."/>
            <person name="Creasy T.H."/>
            <person name="Dewar K."/>
            <person name="Dunn P."/>
            <person name="Etgu P."/>
            <person name="Feldblyum T.V."/>
            <person name="Feng J.-D."/>
            <person name="Fong B."/>
            <person name="Fujii C.Y."/>
            <person name="Gill J.E."/>
            <person name="Goldsmith A.D."/>
            <person name="Haas B."/>
            <person name="Hansen N.F."/>
            <person name="Hughes B."/>
            <person name="Huizar L."/>
            <person name="Hunter J.L."/>
            <person name="Jenkins J."/>
            <person name="Johnson-Hopson C."/>
            <person name="Khan S."/>
            <person name="Khaykin E."/>
            <person name="Kim C.J."/>
            <person name="Koo H.L."/>
            <person name="Kremenetskaia I."/>
            <person name="Kurtz D.B."/>
            <person name="Kwan A."/>
            <person name="Lam B."/>
            <person name="Langin-Hooper S."/>
            <person name="Lee A."/>
            <person name="Lee J.M."/>
            <person name="Lenz C.A."/>
            <person name="Li J.H."/>
            <person name="Li Y.-P."/>
            <person name="Lin X."/>
            <person name="Liu S.X."/>
            <person name="Liu Z.A."/>
            <person name="Luros J.S."/>
            <person name="Maiti R."/>
            <person name="Marziali A."/>
            <person name="Militscher J."/>
            <person name="Miranda M."/>
            <person name="Nguyen M."/>
            <person name="Nierman W.C."/>
            <person name="Osborne B.I."/>
            <person name="Pai G."/>
            <person name="Peterson J."/>
            <person name="Pham P.K."/>
            <person name="Rizzo M."/>
            <person name="Rooney T."/>
            <person name="Rowley D."/>
            <person name="Sakano H."/>
            <person name="Salzberg S.L."/>
            <person name="Schwartz J.R."/>
            <person name="Shinn P."/>
            <person name="Southwick A.M."/>
            <person name="Sun H."/>
            <person name="Tallon L.J."/>
            <person name="Tambunga G."/>
            <person name="Toriumi M.J."/>
            <person name="Town C.D."/>
            <person name="Utterback T."/>
            <person name="Van Aken S."/>
            <person name="Vaysberg M."/>
            <person name="Vysotskaia V.S."/>
            <person name="Walker M."/>
            <person name="Wu D."/>
            <person name="Yu G."/>
            <person name="Fraser C.M."/>
            <person name="Venter J.C."/>
            <person name="Davis R.W."/>
        </authorList>
    </citation>
    <scope>NUCLEOTIDE SEQUENCE [LARGE SCALE GENOMIC DNA]</scope>
    <source>
        <strain>cv. Columbia</strain>
    </source>
</reference>
<reference key="2">
    <citation type="journal article" date="2017" name="Plant J.">
        <title>Araport11: a complete reannotation of the Arabidopsis thaliana reference genome.</title>
        <authorList>
            <person name="Cheng C.Y."/>
            <person name="Krishnakumar V."/>
            <person name="Chan A.P."/>
            <person name="Thibaud-Nissen F."/>
            <person name="Schobel S."/>
            <person name="Town C.D."/>
        </authorList>
    </citation>
    <scope>GENOME REANNOTATION</scope>
    <source>
        <strain>cv. Columbia</strain>
    </source>
</reference>
<reference key="3">
    <citation type="journal article" date="2003" name="Science">
        <title>Empirical analysis of transcriptional activity in the Arabidopsis genome.</title>
        <authorList>
            <person name="Yamada K."/>
            <person name="Lim J."/>
            <person name="Dale J.M."/>
            <person name="Chen H."/>
            <person name="Shinn P."/>
            <person name="Palm C.J."/>
            <person name="Southwick A.M."/>
            <person name="Wu H.C."/>
            <person name="Kim C.J."/>
            <person name="Nguyen M."/>
            <person name="Pham P.K."/>
            <person name="Cheuk R.F."/>
            <person name="Karlin-Newmann G."/>
            <person name="Liu S.X."/>
            <person name="Lam B."/>
            <person name="Sakano H."/>
            <person name="Wu T."/>
            <person name="Yu G."/>
            <person name="Miranda M."/>
            <person name="Quach H.L."/>
            <person name="Tripp M."/>
            <person name="Chang C.H."/>
            <person name="Lee J.M."/>
            <person name="Toriumi M.J."/>
            <person name="Chan M.M."/>
            <person name="Tang C.C."/>
            <person name="Onodera C.S."/>
            <person name="Deng J.M."/>
            <person name="Akiyama K."/>
            <person name="Ansari Y."/>
            <person name="Arakawa T."/>
            <person name="Banh J."/>
            <person name="Banno F."/>
            <person name="Bowser L."/>
            <person name="Brooks S.Y."/>
            <person name="Carninci P."/>
            <person name="Chao Q."/>
            <person name="Choy N."/>
            <person name="Enju A."/>
            <person name="Goldsmith A.D."/>
            <person name="Gurjal M."/>
            <person name="Hansen N.F."/>
            <person name="Hayashizaki Y."/>
            <person name="Johnson-Hopson C."/>
            <person name="Hsuan V.W."/>
            <person name="Iida K."/>
            <person name="Karnes M."/>
            <person name="Khan S."/>
            <person name="Koesema E."/>
            <person name="Ishida J."/>
            <person name="Jiang P.X."/>
            <person name="Jones T."/>
            <person name="Kawai J."/>
            <person name="Kamiya A."/>
            <person name="Meyers C."/>
            <person name="Nakajima M."/>
            <person name="Narusaka M."/>
            <person name="Seki M."/>
            <person name="Sakurai T."/>
            <person name="Satou M."/>
            <person name="Tamse R."/>
            <person name="Vaysberg M."/>
            <person name="Wallender E.K."/>
            <person name="Wong C."/>
            <person name="Yamamura Y."/>
            <person name="Yuan S."/>
            <person name="Shinozaki K."/>
            <person name="Davis R.W."/>
            <person name="Theologis A."/>
            <person name="Ecker J.R."/>
        </authorList>
    </citation>
    <scope>NUCLEOTIDE SEQUENCE [LARGE SCALE MRNA]</scope>
    <source>
        <strain>cv. Columbia</strain>
    </source>
</reference>
<reference key="4">
    <citation type="submission" date="2002-03" db="EMBL/GenBank/DDBJ databases">
        <title>Full-length cDNA from Arabidopsis thaliana.</title>
        <authorList>
            <person name="Brover V.V."/>
            <person name="Troukhan M.E."/>
            <person name="Alexandrov N.A."/>
            <person name="Lu Y.-P."/>
            <person name="Flavell R.B."/>
            <person name="Feldmann K.A."/>
        </authorList>
    </citation>
    <scope>NUCLEOTIDE SEQUENCE [LARGE SCALE MRNA]</scope>
</reference>
<reference key="5">
    <citation type="journal article" date="2002" name="Science">
        <title>A role for peroxisomes in photomorphogenesis and development of Arabidopsis.</title>
        <authorList>
            <person name="Hu J."/>
            <person name="Aguirre M."/>
            <person name="Peto C."/>
            <person name="Alonso J."/>
            <person name="Ecker J."/>
            <person name="Chory J."/>
        </authorList>
    </citation>
    <scope>TISSUE SPECIFICITY</scope>
    <scope>SUBCELLULAR LOCATION</scope>
    <scope>DEVELOPMENTAL STAGE</scope>
    <scope>MUTAGENESIS OF VAL-275</scope>
    <scope>DISRUPTION PHENOTYPE</scope>
</reference>
<reference key="6">
    <citation type="journal article" date="2005" name="Plant Physiol.">
        <title>AtPEX2 and AtPEX10 are targeted to peroxisomes independently of known endoplasmic reticulum trafficking routes.</title>
        <authorList>
            <person name="Sparkes I.A."/>
            <person name="Hawes C."/>
            <person name="Baker A."/>
        </authorList>
    </citation>
    <scope>SUBCELLULAR LOCATION</scope>
    <source>
        <strain>cv. Columbia</strain>
    </source>
</reference>
<reference key="7">
    <citation type="journal article" date="2007" name="Plant Cell Physiol.">
        <title>Functional classification of Arabidopsis peroxisome biogenesis factors proposed from analyses of knockdown mutants.</title>
        <authorList>
            <person name="Nito K."/>
            <person name="Kamigaki A."/>
            <person name="Kondo M."/>
            <person name="Hayashi M."/>
            <person name="Nishimura M."/>
        </authorList>
    </citation>
    <scope>FUNCTION</scope>
</reference>
<reference key="8">
    <citation type="journal article" date="2010" name="Proc. Natl. Acad. Sci. U.S.A.">
        <title>Different functions of the C3HC4 zinc RING finger peroxins PEX10, PEX2, and PEX12 in peroxisome formation and matrix protein import.</title>
        <authorList>
            <person name="Prestele J."/>
            <person name="Hierl G."/>
            <person name="Scherling C."/>
            <person name="Hetkamp S."/>
            <person name="Schwechheimer C."/>
            <person name="Isono E."/>
            <person name="Weckwerth W."/>
            <person name="Wanner G."/>
            <person name="Gietl C."/>
        </authorList>
    </citation>
    <scope>FUNCTION</scope>
</reference>
<reference key="9">
    <citation type="journal article" date="2013" name="J. Integr. Plant Biol.">
        <title>Arabidopsis RING peroxins are E3 ubiquitin ligases that interact with two homologous ubiquitin receptor proteins(F).</title>
        <authorList>
            <person name="Kaur N."/>
            <person name="Zhao Q."/>
            <person name="Xie Q."/>
            <person name="Hu J."/>
        </authorList>
    </citation>
    <scope>INTERACTION WITH DSK2A AND DSK2B</scope>
    <scope>FUNCTION</scope>
</reference>
<reference key="10">
    <citation type="journal article" date="2014" name="Plant Physiol.">
        <title>Peroxisomal ubiquitin-protein ligases peroxin2 and peroxin10 have distinct but synergistic roles in matrix protein import and peroxin5 retrotranslocation in Arabidopsis.</title>
        <authorList>
            <person name="Burkhart S.E."/>
            <person name="Kao Y.T."/>
            <person name="Bartel B."/>
        </authorList>
    </citation>
    <scope>FUNCTION</scope>
    <scope>MUTAGENESIS OF MET-55 AND ARG-161</scope>
</reference>
<organism>
    <name type="scientific">Arabidopsis thaliana</name>
    <name type="common">Mouse-ear cress</name>
    <dbReference type="NCBI Taxonomy" id="3702"/>
    <lineage>
        <taxon>Eukaryota</taxon>
        <taxon>Viridiplantae</taxon>
        <taxon>Streptophyta</taxon>
        <taxon>Embryophyta</taxon>
        <taxon>Tracheophyta</taxon>
        <taxon>Spermatophyta</taxon>
        <taxon>Magnoliopsida</taxon>
        <taxon>eudicotyledons</taxon>
        <taxon>Gunneridae</taxon>
        <taxon>Pentapetalae</taxon>
        <taxon>rosids</taxon>
        <taxon>malvids</taxon>
        <taxon>Brassicales</taxon>
        <taxon>Brassicaceae</taxon>
        <taxon>Camelineae</taxon>
        <taxon>Arabidopsis</taxon>
    </lineage>
</organism>
<dbReference type="EC" id="2.3.2.36" evidence="2"/>
<dbReference type="EMBL" id="AC010793">
    <property type="protein sequence ID" value="AAF68113.1"/>
    <property type="status" value="ALT_SEQ"/>
    <property type="molecule type" value="Genomic_DNA"/>
</dbReference>
<dbReference type="EMBL" id="AC011717">
    <property type="protein sequence ID" value="AAG52254.1"/>
    <property type="molecule type" value="Genomic_DNA"/>
</dbReference>
<dbReference type="EMBL" id="CP002684">
    <property type="protein sequence ID" value="AEE36301.1"/>
    <property type="molecule type" value="Genomic_DNA"/>
</dbReference>
<dbReference type="EMBL" id="AY064063">
    <property type="protein sequence ID" value="AAL36419.1"/>
    <property type="molecule type" value="mRNA"/>
</dbReference>
<dbReference type="EMBL" id="AY096373">
    <property type="protein sequence ID" value="AAM20014.1"/>
    <property type="molecule type" value="mRNA"/>
</dbReference>
<dbReference type="EMBL" id="AY084823">
    <property type="protein sequence ID" value="AAM61388.1"/>
    <property type="molecule type" value="mRNA"/>
</dbReference>
<dbReference type="PIR" id="A96829">
    <property type="entry name" value="A96829"/>
</dbReference>
<dbReference type="RefSeq" id="NP_565222.1">
    <molecule id="Q9CA86-1"/>
    <property type="nucleotide sequence ID" value="NM_106630.3"/>
</dbReference>
<dbReference type="SMR" id="Q9CA86"/>
<dbReference type="BioGRID" id="29538">
    <property type="interactions" value="5"/>
</dbReference>
<dbReference type="FunCoup" id="Q9CA86">
    <property type="interactions" value="3221"/>
</dbReference>
<dbReference type="IntAct" id="Q9CA86">
    <property type="interactions" value="3"/>
</dbReference>
<dbReference type="STRING" id="3702.Q9CA86"/>
<dbReference type="GlyGen" id="Q9CA86">
    <property type="glycosylation" value="1 site"/>
</dbReference>
<dbReference type="PaxDb" id="3702-AT1G79810.1"/>
<dbReference type="ProteomicsDB" id="251040">
    <molecule id="Q9CA86-1"/>
</dbReference>
<dbReference type="EnsemblPlants" id="AT1G79810.1">
    <molecule id="Q9CA86-1"/>
    <property type="protein sequence ID" value="AT1G79810.1"/>
    <property type="gene ID" value="AT1G79810"/>
</dbReference>
<dbReference type="GeneID" id="844320"/>
<dbReference type="Gramene" id="AT1G79810.1">
    <molecule id="Q9CA86-1"/>
    <property type="protein sequence ID" value="AT1G79810.1"/>
    <property type="gene ID" value="AT1G79810"/>
</dbReference>
<dbReference type="KEGG" id="ath:AT1G79810"/>
<dbReference type="Araport" id="AT1G79810"/>
<dbReference type="TAIR" id="AT1G79810">
    <property type="gene designation" value="TED3"/>
</dbReference>
<dbReference type="eggNOG" id="KOG2879">
    <property type="taxonomic scope" value="Eukaryota"/>
</dbReference>
<dbReference type="HOGENOM" id="CLU_024591_3_0_1"/>
<dbReference type="InParanoid" id="Q9CA86"/>
<dbReference type="OMA" id="WHGLMEL"/>
<dbReference type="OrthoDB" id="1701437at2759"/>
<dbReference type="PhylomeDB" id="Q9CA86"/>
<dbReference type="UniPathway" id="UPA00143"/>
<dbReference type="PRO" id="PR:Q9CA86"/>
<dbReference type="Proteomes" id="UP000006548">
    <property type="component" value="Chromosome 1"/>
</dbReference>
<dbReference type="ExpressionAtlas" id="Q9CA86">
    <property type="expression patterns" value="baseline and differential"/>
</dbReference>
<dbReference type="GO" id="GO:0005829">
    <property type="term" value="C:cytosol"/>
    <property type="evidence" value="ECO:0000314"/>
    <property type="project" value="TAIR"/>
</dbReference>
<dbReference type="GO" id="GO:0005778">
    <property type="term" value="C:peroxisomal membrane"/>
    <property type="evidence" value="ECO:0007669"/>
    <property type="project" value="UniProtKB-SubCell"/>
</dbReference>
<dbReference type="GO" id="GO:0005777">
    <property type="term" value="C:peroxisome"/>
    <property type="evidence" value="ECO:0000314"/>
    <property type="project" value="TAIR"/>
</dbReference>
<dbReference type="GO" id="GO:0009506">
    <property type="term" value="C:plasmodesma"/>
    <property type="evidence" value="ECO:0007005"/>
    <property type="project" value="TAIR"/>
</dbReference>
<dbReference type="GO" id="GO:0004842">
    <property type="term" value="F:ubiquitin-protein transferase activity"/>
    <property type="evidence" value="ECO:0000314"/>
    <property type="project" value="TAIR"/>
</dbReference>
<dbReference type="GO" id="GO:0008270">
    <property type="term" value="F:zinc ion binding"/>
    <property type="evidence" value="ECO:0007669"/>
    <property type="project" value="UniProtKB-KW"/>
</dbReference>
<dbReference type="GO" id="GO:0006635">
    <property type="term" value="P:fatty acid beta-oxidation"/>
    <property type="evidence" value="ECO:0000315"/>
    <property type="project" value="TAIR"/>
</dbReference>
<dbReference type="GO" id="GO:0007031">
    <property type="term" value="P:peroxisome organization"/>
    <property type="evidence" value="ECO:0000315"/>
    <property type="project" value="TAIR"/>
</dbReference>
<dbReference type="GO" id="GO:0009640">
    <property type="term" value="P:photomorphogenesis"/>
    <property type="evidence" value="ECO:0000315"/>
    <property type="project" value="TAIR"/>
</dbReference>
<dbReference type="GO" id="GO:0016558">
    <property type="term" value="P:protein import into peroxisome matrix"/>
    <property type="evidence" value="ECO:0000315"/>
    <property type="project" value="TAIR"/>
</dbReference>
<dbReference type="GO" id="GO:0006513">
    <property type="term" value="P:protein monoubiquitination"/>
    <property type="evidence" value="ECO:0000314"/>
    <property type="project" value="TAIR"/>
</dbReference>
<dbReference type="CDD" id="cd16526">
    <property type="entry name" value="RING-HC_PEX2"/>
    <property type="match status" value="1"/>
</dbReference>
<dbReference type="FunFam" id="3.30.40.10:FF:000826">
    <property type="entry name" value="Peroxisome biogenesis factor 2"/>
    <property type="match status" value="1"/>
</dbReference>
<dbReference type="Gene3D" id="3.30.40.10">
    <property type="entry name" value="Zinc/RING finger domain, C3HC4 (zinc finger)"/>
    <property type="match status" value="1"/>
</dbReference>
<dbReference type="InterPro" id="IPR025654">
    <property type="entry name" value="PEX2/10"/>
</dbReference>
<dbReference type="InterPro" id="IPR006845">
    <property type="entry name" value="Pex_N"/>
</dbReference>
<dbReference type="InterPro" id="IPR045859">
    <property type="entry name" value="RING-HC_PEX2"/>
</dbReference>
<dbReference type="InterPro" id="IPR018957">
    <property type="entry name" value="Znf_C3HC4_RING-type"/>
</dbReference>
<dbReference type="InterPro" id="IPR001841">
    <property type="entry name" value="Znf_RING"/>
</dbReference>
<dbReference type="InterPro" id="IPR013083">
    <property type="entry name" value="Znf_RING/FYVE/PHD"/>
</dbReference>
<dbReference type="InterPro" id="IPR017907">
    <property type="entry name" value="Znf_RING_CS"/>
</dbReference>
<dbReference type="PANTHER" id="PTHR48178">
    <property type="entry name" value="PEROXISOME BIOGENESIS FACTOR 2"/>
    <property type="match status" value="1"/>
</dbReference>
<dbReference type="PANTHER" id="PTHR48178:SF1">
    <property type="entry name" value="PEROXISOME BIOGENESIS FACTOR 2"/>
    <property type="match status" value="1"/>
</dbReference>
<dbReference type="Pfam" id="PF04757">
    <property type="entry name" value="Pex2_Pex12"/>
    <property type="match status" value="1"/>
</dbReference>
<dbReference type="Pfam" id="PF00097">
    <property type="entry name" value="zf-C3HC4"/>
    <property type="match status" value="1"/>
</dbReference>
<dbReference type="SUPFAM" id="SSF57850">
    <property type="entry name" value="RING/U-box"/>
    <property type="match status" value="1"/>
</dbReference>
<dbReference type="PROSITE" id="PS00518">
    <property type="entry name" value="ZF_RING_1"/>
    <property type="match status" value="1"/>
</dbReference>
<dbReference type="PROSITE" id="PS50089">
    <property type="entry name" value="ZF_RING_2"/>
    <property type="match status" value="1"/>
</dbReference>
<comment type="function">
    <text evidence="2 6 7 8 9">E3 ubiquitin-protein ligase component of a retrotranslocation channel required for peroxisome organization by mediating export of the PEX5 receptor from peroxisomes to the cytosol, thereby promoting PEX5 recycling (PubMed:17478547, PubMed:20679226, PubMed:23336935, PubMed:25214533). The retrotranslocation channel is composed of PEX2, PEX10 and PEX12; each subunit contributing transmembrane segments that coassemble into an open channel that specifically allows the passage of PEX5 through the peroxisomal membrane (By similarity). PEX2 also regulates peroxisome organization by acting as a E3 ubiquitin-protein ligase (PubMed:17478547, PubMed:20679226, PubMed:23336935). PEX2 ubiquitinates PEX5 during its passage through the retrotranslocation channel: catalyzes monoubiquitination of PEX5 at 'Cys-6', a modification that acts as a signal for PEX5 extraction into the cytosol (By similarity).</text>
</comment>
<comment type="catalytic activity">
    <reaction evidence="2">
        <text>[E2 ubiquitin-conjugating enzyme]-S-ubiquitinyl-L-cysteine + [acceptor protein]-L-cysteine = [E2 ubiquitin-conjugating enzyme]-L-cysteine + [acceptor protein]-S-ubiquitinyl-L-cysteine.</text>
        <dbReference type="EC" id="2.3.2.36"/>
    </reaction>
</comment>
<comment type="pathway">
    <text evidence="2">Protein modification; protein ubiquitination.</text>
</comment>
<comment type="subunit">
    <text evidence="2 8">Component of the PEX2-PEX10-PEX12 retrotranslocation channel (By similarity). Interacts with DSK2a and DSK2b (PubMed:23336935).</text>
</comment>
<comment type="interaction">
    <interactant intactId="EBI-4470254">
        <id>Q9CA86</id>
    </interactant>
    <interactant intactId="EBI-6860633">
        <id>Q9SII9</id>
        <label>DSK2A</label>
    </interactant>
    <organismsDiffer>false</organismsDiffer>
    <experiments>3</experiments>
</comment>
<comment type="interaction">
    <interactant intactId="EBI-4470254">
        <id>Q9CA86</id>
    </interactant>
    <interactant intactId="EBI-4433040">
        <id>Q9SII8</id>
        <label>DSK2B</label>
    </interactant>
    <organismsDiffer>false</organismsDiffer>
    <experiments>4</experiments>
</comment>
<comment type="subcellular location">
    <subcellularLocation>
        <location evidence="13 14">Peroxisome membrane</location>
        <topology evidence="3">Multi-pass membrane protein</topology>
    </subcellularLocation>
</comment>
<comment type="alternative products">
    <event type="alternative splicing"/>
    <isoform>
        <id>Q9CA86-1</id>
        <name>1</name>
        <sequence type="displayed"/>
    </isoform>
    <text>A number of isoforms are produced. According to EST sequences.</text>
</comment>
<comment type="tissue specificity">
    <text evidence="5">Expressed in roots, stems, leaves, flowers, pollen, ovules, seeds and siliques.</text>
</comment>
<comment type="developmental stage">
    <text evidence="5">Expressed throughout development.</text>
</comment>
<comment type="domain">
    <text evidence="1">The three subunits of the retrotranslocation channel (PEX2, PEX10 and PEX12) coassemble in the membrane into a channel with an open 10 Angstrom pore. The RING-type zinc-fingers that catalyze PEX5 receptor ubiquitination are positioned above the pore on the cytosolic side of the complex.</text>
</comment>
<comment type="disruption phenotype">
    <text evidence="5">Embryo lethality at the heart stage.</text>
</comment>
<comment type="similarity">
    <text evidence="12">Belongs to the pex2/pex10/pex12 family.</text>
</comment>
<comment type="sequence caution" evidence="12">
    <conflict type="erroneous gene model prediction">
        <sequence resource="EMBL-CDS" id="AAF68113"/>
    </conflict>
</comment>
<accession>Q9CA86</accession>
<accession>Q8LFI7</accession>
<accession>Q9M9Z9</accession>
<feature type="chain" id="PRO_0000056375" description="Peroxisome biogenesis protein 2">
    <location>
        <begin position="1"/>
        <end position="333"/>
    </location>
</feature>
<feature type="topological domain" description="Peroxisomal matrix" evidence="1">
    <location>
        <begin position="1"/>
        <end position="38"/>
    </location>
</feature>
<feature type="transmembrane region" description="Helical; Name=TM1" evidence="1">
    <location>
        <begin position="39"/>
        <end position="65"/>
    </location>
</feature>
<feature type="topological domain" description="Cytoplasmic" evidence="1">
    <location>
        <begin position="66"/>
        <end position="71"/>
    </location>
</feature>
<feature type="transmembrane region" description="Helical; Name=TM2" evidence="1">
    <location>
        <begin position="72"/>
        <end position="97"/>
    </location>
</feature>
<feature type="topological domain" description="Peroxisomal matrix" evidence="1">
    <location>
        <begin position="98"/>
        <end position="131"/>
    </location>
</feature>
<feature type="transmembrane region" description="Helical; Name=TM3" evidence="1">
    <location>
        <begin position="132"/>
        <end position="158"/>
    </location>
</feature>
<feature type="topological domain" description="Cytoplasmic" evidence="1">
    <location>
        <begin position="159"/>
        <end position="168"/>
    </location>
</feature>
<feature type="transmembrane region" description="Helical; Name=TM4" evidence="1">
    <location>
        <begin position="169"/>
        <end position="199"/>
    </location>
</feature>
<feature type="topological domain" description="Peroxisomal matrix" evidence="1">
    <location>
        <begin position="200"/>
        <end position="226"/>
    </location>
</feature>
<feature type="transmembrane region" description="Helical; Name=TM5" evidence="1">
    <location>
        <begin position="227"/>
        <end position="250"/>
    </location>
</feature>
<feature type="topological domain" description="Cytoplasmic" evidence="1">
    <location>
        <begin position="251"/>
        <end position="333"/>
    </location>
</feature>
<feature type="zinc finger region" description="RING-type" evidence="4">
    <location>
        <begin position="277"/>
        <end position="318"/>
    </location>
</feature>
<feature type="binding site" evidence="1">
    <location>
        <position position="277"/>
    </location>
    <ligand>
        <name>Zn(2+)</name>
        <dbReference type="ChEBI" id="CHEBI:29105"/>
        <label>1</label>
    </ligand>
</feature>
<feature type="binding site" evidence="1">
    <location>
        <position position="280"/>
    </location>
    <ligand>
        <name>Zn(2+)</name>
        <dbReference type="ChEBI" id="CHEBI:29105"/>
        <label>1</label>
    </ligand>
</feature>
<feature type="binding site" evidence="1">
    <location>
        <position position="293"/>
    </location>
    <ligand>
        <name>Zn(2+)</name>
        <dbReference type="ChEBI" id="CHEBI:29105"/>
        <label>2</label>
    </ligand>
</feature>
<feature type="binding site" evidence="1">
    <location>
        <position position="295"/>
    </location>
    <ligand>
        <name>Zn(2+)</name>
        <dbReference type="ChEBI" id="CHEBI:29105"/>
        <label>2</label>
    </ligand>
</feature>
<feature type="binding site" evidence="1">
    <location>
        <position position="298"/>
    </location>
    <ligand>
        <name>Zn(2+)</name>
        <dbReference type="ChEBI" id="CHEBI:29105"/>
        <label>1</label>
    </ligand>
</feature>
<feature type="binding site" evidence="1">
    <location>
        <position position="301"/>
    </location>
    <ligand>
        <name>Zn(2+)</name>
        <dbReference type="ChEBI" id="CHEBI:29105"/>
        <label>1</label>
    </ligand>
</feature>
<feature type="binding site" evidence="1">
    <location>
        <position position="314"/>
    </location>
    <ligand>
        <name>Zn(2+)</name>
        <dbReference type="ChEBI" id="CHEBI:29105"/>
        <label>2</label>
    </ligand>
</feature>
<feature type="binding site" evidence="1">
    <location>
        <position position="317"/>
    </location>
    <ligand>
        <name>Zn(2+)</name>
        <dbReference type="ChEBI" id="CHEBI:29105"/>
        <label>2</label>
    </ligand>
</feature>
<feature type="mutagenesis site" description="In pex2-2 mutant; defects peroxisomal matrix protein degradation." evidence="9">
    <original>M</original>
    <variation>I</variation>
    <location>
        <position position="55"/>
    </location>
</feature>
<feature type="mutagenesis site" description="In pex2-1 mutant; defects peroxisomal matrix protein degradation." evidence="9">
    <original>R</original>
    <variation>K</variation>
    <location>
        <position position="161"/>
    </location>
</feature>
<feature type="mutagenesis site" description="In ted3; suppressor of the det1 mutant phenotype." evidence="5">
    <original>V</original>
    <variation>M</variation>
    <location>
        <position position="275"/>
    </location>
</feature>
<protein>
    <recommendedName>
        <fullName>Peroxisome biogenesis protein 2</fullName>
        <ecNumber evidence="2">2.3.2.36</ecNumber>
    </recommendedName>
    <alternativeName>
        <fullName>E3 ubiquitin-protein ligase PEX2</fullName>
    </alternativeName>
    <alternativeName>
        <fullName>Peroxin-2</fullName>
        <shortName evidence="11">AtPEX2</shortName>
        <shortName>AthPEX2</shortName>
    </alternativeName>
    <alternativeName>
        <fullName>Pex2p</fullName>
    </alternativeName>
</protein>
<keyword id="KW-0025">Alternative splicing</keyword>
<keyword id="KW-0472">Membrane</keyword>
<keyword id="KW-0479">Metal-binding</keyword>
<keyword id="KW-0576">Peroxisome</keyword>
<keyword id="KW-0962">Peroxisome biogenesis</keyword>
<keyword id="KW-0653">Protein transport</keyword>
<keyword id="KW-1185">Reference proteome</keyword>
<keyword id="KW-0808">Transferase</keyword>
<keyword id="KW-0812">Transmembrane</keyword>
<keyword id="KW-1133">Transmembrane helix</keyword>
<keyword id="KW-0813">Transport</keyword>
<keyword id="KW-0833">Ubl conjugation pathway</keyword>
<keyword id="KW-0862">Zinc</keyword>
<keyword id="KW-0863">Zinc-finger</keyword>
<name>PEX2_ARATH</name>